<sequence length="118" mass="13041">MATATSKPKAVERIKMRIRKGDTVQVIAGKDKGKTGAVLRTLPNENRVIVEGVNMRTRHEKPSQEGESGRIVTEEASLHASNVMLYSTDKKVASRVEIVVEKDGTKKRKLKKTGEVLD</sequence>
<organism>
    <name type="scientific">Synechococcus sp. (strain CC9902)</name>
    <dbReference type="NCBI Taxonomy" id="316279"/>
    <lineage>
        <taxon>Bacteria</taxon>
        <taxon>Bacillati</taxon>
        <taxon>Cyanobacteriota</taxon>
        <taxon>Cyanophyceae</taxon>
        <taxon>Synechococcales</taxon>
        <taxon>Synechococcaceae</taxon>
        <taxon>Synechococcus</taxon>
    </lineage>
</organism>
<gene>
    <name evidence="1" type="primary">rplX</name>
    <name evidence="1" type="synonym">rpl24</name>
    <name type="ordered locus">Syncc9902_1966</name>
</gene>
<dbReference type="EMBL" id="CP000097">
    <property type="protein sequence ID" value="ABB26924.1"/>
    <property type="molecule type" value="Genomic_DNA"/>
</dbReference>
<dbReference type="RefSeq" id="WP_006169851.1">
    <property type="nucleotide sequence ID" value="NC_007513.1"/>
</dbReference>
<dbReference type="SMR" id="Q3AW82"/>
<dbReference type="STRING" id="316279.Syncc9902_1966"/>
<dbReference type="KEGG" id="sye:Syncc9902_1966"/>
<dbReference type="eggNOG" id="COG0198">
    <property type="taxonomic scope" value="Bacteria"/>
</dbReference>
<dbReference type="HOGENOM" id="CLU_093315_2_3_3"/>
<dbReference type="OrthoDB" id="9807419at2"/>
<dbReference type="Proteomes" id="UP000002712">
    <property type="component" value="Chromosome"/>
</dbReference>
<dbReference type="GO" id="GO:1990904">
    <property type="term" value="C:ribonucleoprotein complex"/>
    <property type="evidence" value="ECO:0007669"/>
    <property type="project" value="UniProtKB-KW"/>
</dbReference>
<dbReference type="GO" id="GO:0005840">
    <property type="term" value="C:ribosome"/>
    <property type="evidence" value="ECO:0007669"/>
    <property type="project" value="UniProtKB-KW"/>
</dbReference>
<dbReference type="GO" id="GO:0019843">
    <property type="term" value="F:rRNA binding"/>
    <property type="evidence" value="ECO:0007669"/>
    <property type="project" value="UniProtKB-UniRule"/>
</dbReference>
<dbReference type="GO" id="GO:0003735">
    <property type="term" value="F:structural constituent of ribosome"/>
    <property type="evidence" value="ECO:0007669"/>
    <property type="project" value="InterPro"/>
</dbReference>
<dbReference type="GO" id="GO:0006412">
    <property type="term" value="P:translation"/>
    <property type="evidence" value="ECO:0007669"/>
    <property type="project" value="UniProtKB-UniRule"/>
</dbReference>
<dbReference type="CDD" id="cd06089">
    <property type="entry name" value="KOW_RPL26"/>
    <property type="match status" value="1"/>
</dbReference>
<dbReference type="Gene3D" id="2.30.30.30">
    <property type="match status" value="1"/>
</dbReference>
<dbReference type="HAMAP" id="MF_01326_B">
    <property type="entry name" value="Ribosomal_uL24_B"/>
    <property type="match status" value="1"/>
</dbReference>
<dbReference type="InterPro" id="IPR005824">
    <property type="entry name" value="KOW"/>
</dbReference>
<dbReference type="InterPro" id="IPR014722">
    <property type="entry name" value="Rib_uL2_dom2"/>
</dbReference>
<dbReference type="InterPro" id="IPR003256">
    <property type="entry name" value="Ribosomal_uL24"/>
</dbReference>
<dbReference type="InterPro" id="IPR005825">
    <property type="entry name" value="Ribosomal_uL24_CS"/>
</dbReference>
<dbReference type="InterPro" id="IPR041988">
    <property type="entry name" value="Ribosomal_uL24_KOW"/>
</dbReference>
<dbReference type="InterPro" id="IPR008991">
    <property type="entry name" value="Translation_prot_SH3-like_sf"/>
</dbReference>
<dbReference type="NCBIfam" id="TIGR01079">
    <property type="entry name" value="rplX_bact"/>
    <property type="match status" value="1"/>
</dbReference>
<dbReference type="PANTHER" id="PTHR12903">
    <property type="entry name" value="MITOCHONDRIAL RIBOSOMAL PROTEIN L24"/>
    <property type="match status" value="1"/>
</dbReference>
<dbReference type="Pfam" id="PF00467">
    <property type="entry name" value="KOW"/>
    <property type="match status" value="1"/>
</dbReference>
<dbReference type="Pfam" id="PF17136">
    <property type="entry name" value="ribosomal_L24"/>
    <property type="match status" value="1"/>
</dbReference>
<dbReference type="SMART" id="SM00739">
    <property type="entry name" value="KOW"/>
    <property type="match status" value="1"/>
</dbReference>
<dbReference type="SUPFAM" id="SSF50104">
    <property type="entry name" value="Translation proteins SH3-like domain"/>
    <property type="match status" value="1"/>
</dbReference>
<dbReference type="PROSITE" id="PS01108">
    <property type="entry name" value="RIBOSOMAL_L24"/>
    <property type="match status" value="1"/>
</dbReference>
<feature type="chain" id="PRO_0000241673" description="Large ribosomal subunit protein uL24">
    <location>
        <begin position="1"/>
        <end position="118"/>
    </location>
</feature>
<comment type="function">
    <text evidence="1">One of two assembly initiator proteins, it binds directly to the 5'-end of the 23S rRNA, where it nucleates assembly of the 50S subunit.</text>
</comment>
<comment type="function">
    <text evidence="1">One of the proteins that surrounds the polypeptide exit tunnel on the outside of the subunit.</text>
</comment>
<comment type="subunit">
    <text evidence="1">Part of the 50S ribosomal subunit.</text>
</comment>
<comment type="similarity">
    <text evidence="1">Belongs to the universal ribosomal protein uL24 family.</text>
</comment>
<evidence type="ECO:0000255" key="1">
    <source>
        <dbReference type="HAMAP-Rule" id="MF_01326"/>
    </source>
</evidence>
<evidence type="ECO:0000305" key="2"/>
<keyword id="KW-1185">Reference proteome</keyword>
<keyword id="KW-0687">Ribonucleoprotein</keyword>
<keyword id="KW-0689">Ribosomal protein</keyword>
<keyword id="KW-0694">RNA-binding</keyword>
<keyword id="KW-0699">rRNA-binding</keyword>
<name>RL24_SYNS9</name>
<accession>Q3AW82</accession>
<protein>
    <recommendedName>
        <fullName evidence="1">Large ribosomal subunit protein uL24</fullName>
    </recommendedName>
    <alternativeName>
        <fullName evidence="2">50S ribosomal protein L24</fullName>
    </alternativeName>
</protein>
<proteinExistence type="inferred from homology"/>
<reference key="1">
    <citation type="submission" date="2005-08" db="EMBL/GenBank/DDBJ databases">
        <title>Complete sequence of Synechococcus sp. CC9902.</title>
        <authorList>
            <person name="Copeland A."/>
            <person name="Lucas S."/>
            <person name="Lapidus A."/>
            <person name="Barry K."/>
            <person name="Detter J.C."/>
            <person name="Glavina T."/>
            <person name="Hammon N."/>
            <person name="Israni S."/>
            <person name="Pitluck S."/>
            <person name="Martinez M."/>
            <person name="Schmutz J."/>
            <person name="Larimer F."/>
            <person name="Land M."/>
            <person name="Kyrpides N."/>
            <person name="Ivanova N."/>
            <person name="Richardson P."/>
        </authorList>
    </citation>
    <scope>NUCLEOTIDE SEQUENCE [LARGE SCALE GENOMIC DNA]</scope>
    <source>
        <strain>CC9902</strain>
    </source>
</reference>